<proteinExistence type="evidence at protein level"/>
<dbReference type="EC" id="1.2.4.1"/>
<dbReference type="EMBL" id="AE005174">
    <property type="protein sequence ID" value="AAG54418.1"/>
    <property type="molecule type" value="Genomic_DNA"/>
</dbReference>
<dbReference type="EMBL" id="BA000007">
    <property type="protein sequence ID" value="BAB33541.1"/>
    <property type="molecule type" value="Genomic_DNA"/>
</dbReference>
<dbReference type="PIR" id="F85494">
    <property type="entry name" value="F85494"/>
</dbReference>
<dbReference type="PIR" id="F90643">
    <property type="entry name" value="F90643"/>
</dbReference>
<dbReference type="RefSeq" id="NP_308145.1">
    <property type="nucleotide sequence ID" value="NC_002695.1"/>
</dbReference>
<dbReference type="RefSeq" id="WP_000003820.1">
    <property type="nucleotide sequence ID" value="NZ_VOAI01000002.1"/>
</dbReference>
<dbReference type="PDB" id="3LPL">
    <property type="method" value="X-ray"/>
    <property type="resolution" value="2.10 A"/>
    <property type="chains" value="A/B=2-887"/>
</dbReference>
<dbReference type="PDB" id="3LQ2">
    <property type="method" value="X-ray"/>
    <property type="resolution" value="1.96 A"/>
    <property type="chains" value="A/B=2-887"/>
</dbReference>
<dbReference type="PDB" id="3LQ4">
    <property type="method" value="X-ray"/>
    <property type="resolution" value="1.98 A"/>
    <property type="chains" value="A/B=2-887"/>
</dbReference>
<dbReference type="PDBsum" id="3LPL"/>
<dbReference type="PDBsum" id="3LQ2"/>
<dbReference type="PDBsum" id="3LQ4"/>
<dbReference type="SMR" id="P0AFG9"/>
<dbReference type="IntAct" id="P0AFG9">
    <property type="interactions" value="3"/>
</dbReference>
<dbReference type="STRING" id="155864.Z0124"/>
<dbReference type="GeneID" id="75202071"/>
<dbReference type="GeneID" id="913657"/>
<dbReference type="KEGG" id="ece:Z0124"/>
<dbReference type="KEGG" id="ecs:ECs_0118"/>
<dbReference type="PATRIC" id="fig|386585.9.peg.216"/>
<dbReference type="eggNOG" id="COG2609">
    <property type="taxonomic scope" value="Bacteria"/>
</dbReference>
<dbReference type="HOGENOM" id="CLU_009154_2_0_6"/>
<dbReference type="OMA" id="WSVTSYK"/>
<dbReference type="EvolutionaryTrace" id="P0AFG9"/>
<dbReference type="Proteomes" id="UP000000558">
    <property type="component" value="Chromosome"/>
</dbReference>
<dbReference type="Proteomes" id="UP000002519">
    <property type="component" value="Chromosome"/>
</dbReference>
<dbReference type="GO" id="GO:0046872">
    <property type="term" value="F:metal ion binding"/>
    <property type="evidence" value="ECO:0007669"/>
    <property type="project" value="UniProtKB-KW"/>
</dbReference>
<dbReference type="GO" id="GO:0004739">
    <property type="term" value="F:pyruvate dehydrogenase (acetyl-transferring) activity"/>
    <property type="evidence" value="ECO:0007669"/>
    <property type="project" value="UniProtKB-EC"/>
</dbReference>
<dbReference type="CDD" id="cd02017">
    <property type="entry name" value="TPP_E1_EcPDC_like"/>
    <property type="match status" value="1"/>
</dbReference>
<dbReference type="FunFam" id="3.40.50.920:FF:000005">
    <property type="entry name" value="Pyruvate dehydrogenase E1 component"/>
    <property type="match status" value="1"/>
</dbReference>
<dbReference type="FunFam" id="3.40.50.970:FF:000009">
    <property type="entry name" value="Pyruvate dehydrogenase E1 component"/>
    <property type="match status" value="1"/>
</dbReference>
<dbReference type="FunFam" id="3.40.50.970:FF:000011">
    <property type="entry name" value="Pyruvate dehydrogenase E1 component"/>
    <property type="match status" value="1"/>
</dbReference>
<dbReference type="Gene3D" id="3.40.50.920">
    <property type="match status" value="1"/>
</dbReference>
<dbReference type="Gene3D" id="3.40.50.970">
    <property type="match status" value="2"/>
</dbReference>
<dbReference type="InterPro" id="IPR035807">
    <property type="entry name" value="PDC_E1_N"/>
</dbReference>
<dbReference type="InterPro" id="IPR051157">
    <property type="entry name" value="PDH/Transketolase"/>
</dbReference>
<dbReference type="InterPro" id="IPR004660">
    <property type="entry name" value="PDH_E1"/>
</dbReference>
<dbReference type="InterPro" id="IPR041621">
    <property type="entry name" value="PDH_E1_M"/>
</dbReference>
<dbReference type="InterPro" id="IPR029061">
    <property type="entry name" value="THDP-binding"/>
</dbReference>
<dbReference type="InterPro" id="IPR009014">
    <property type="entry name" value="Transketo_C/PFOR_II"/>
</dbReference>
<dbReference type="InterPro" id="IPR055152">
    <property type="entry name" value="Transketolase-like_C_2"/>
</dbReference>
<dbReference type="InterPro" id="IPR005474">
    <property type="entry name" value="Transketolase_N"/>
</dbReference>
<dbReference type="NCBIfam" id="TIGR00759">
    <property type="entry name" value="aceE"/>
    <property type="match status" value="1"/>
</dbReference>
<dbReference type="PANTHER" id="PTHR43825">
    <property type="entry name" value="PYRUVATE DEHYDROGENASE E1 COMPONENT"/>
    <property type="match status" value="1"/>
</dbReference>
<dbReference type="PANTHER" id="PTHR43825:SF3">
    <property type="entry name" value="PYRUVATE DEHYDROGENASE E1 COMPONENT"/>
    <property type="match status" value="1"/>
</dbReference>
<dbReference type="Pfam" id="PF17831">
    <property type="entry name" value="PDH_E1_M"/>
    <property type="match status" value="1"/>
</dbReference>
<dbReference type="Pfam" id="PF22613">
    <property type="entry name" value="Transketolase_C_1"/>
    <property type="match status" value="1"/>
</dbReference>
<dbReference type="Pfam" id="PF00456">
    <property type="entry name" value="Transketolase_N"/>
    <property type="match status" value="1"/>
</dbReference>
<dbReference type="PIRSF" id="PIRSF000156">
    <property type="entry name" value="Pyruvate_dh_E1"/>
    <property type="match status" value="1"/>
</dbReference>
<dbReference type="SUPFAM" id="SSF52518">
    <property type="entry name" value="Thiamin diphosphate-binding fold (THDP-binding)"/>
    <property type="match status" value="2"/>
</dbReference>
<dbReference type="SUPFAM" id="SSF52922">
    <property type="entry name" value="TK C-terminal domain-like"/>
    <property type="match status" value="1"/>
</dbReference>
<protein>
    <recommendedName>
        <fullName>Pyruvate dehydrogenase E1 component</fullName>
        <shortName>PDH E1 component</shortName>
        <ecNumber>1.2.4.1</ecNumber>
    </recommendedName>
</protein>
<reference key="1">
    <citation type="journal article" date="2001" name="Nature">
        <title>Genome sequence of enterohaemorrhagic Escherichia coli O157:H7.</title>
        <authorList>
            <person name="Perna N.T."/>
            <person name="Plunkett G. III"/>
            <person name="Burland V."/>
            <person name="Mau B."/>
            <person name="Glasner J.D."/>
            <person name="Rose D.J."/>
            <person name="Mayhew G.F."/>
            <person name="Evans P.S."/>
            <person name="Gregor J."/>
            <person name="Kirkpatrick H.A."/>
            <person name="Posfai G."/>
            <person name="Hackett J."/>
            <person name="Klink S."/>
            <person name="Boutin A."/>
            <person name="Shao Y."/>
            <person name="Miller L."/>
            <person name="Grotbeck E.J."/>
            <person name="Davis N.W."/>
            <person name="Lim A."/>
            <person name="Dimalanta E.T."/>
            <person name="Potamousis K."/>
            <person name="Apodaca J."/>
            <person name="Anantharaman T.S."/>
            <person name="Lin J."/>
            <person name="Yen G."/>
            <person name="Schwartz D.C."/>
            <person name="Welch R.A."/>
            <person name="Blattner F.R."/>
        </authorList>
    </citation>
    <scope>NUCLEOTIDE SEQUENCE [LARGE SCALE GENOMIC DNA]</scope>
    <source>
        <strain>O157:H7 / EDL933 / ATCC 700927 / EHEC</strain>
    </source>
</reference>
<reference key="2">
    <citation type="journal article" date="2001" name="DNA Res.">
        <title>Complete genome sequence of enterohemorrhagic Escherichia coli O157:H7 and genomic comparison with a laboratory strain K-12.</title>
        <authorList>
            <person name="Hayashi T."/>
            <person name="Makino K."/>
            <person name="Ohnishi M."/>
            <person name="Kurokawa K."/>
            <person name="Ishii K."/>
            <person name="Yokoyama K."/>
            <person name="Han C.-G."/>
            <person name="Ohtsubo E."/>
            <person name="Nakayama K."/>
            <person name="Murata T."/>
            <person name="Tanaka M."/>
            <person name="Tobe T."/>
            <person name="Iida T."/>
            <person name="Takami H."/>
            <person name="Honda T."/>
            <person name="Sasakawa C."/>
            <person name="Ogasawara N."/>
            <person name="Yasunaga T."/>
            <person name="Kuhara S."/>
            <person name="Shiba T."/>
            <person name="Hattori M."/>
            <person name="Shinagawa H."/>
        </authorList>
    </citation>
    <scope>NUCLEOTIDE SEQUENCE [LARGE SCALE GENOMIC DNA]</scope>
    <source>
        <strain>O157:H7 / Sakai / RIMD 0509952 / EHEC</strain>
    </source>
</reference>
<feature type="initiator methionine" description="Removed" evidence="1">
    <location>
        <position position="1"/>
    </location>
</feature>
<feature type="chain" id="PRO_0000162244" description="Pyruvate dehydrogenase E1 component">
    <location>
        <begin position="2"/>
        <end position="887"/>
    </location>
</feature>
<feature type="binding site" evidence="1">
    <location>
        <position position="231"/>
    </location>
    <ligand>
        <name>Mg(2+)</name>
        <dbReference type="ChEBI" id="CHEBI:18420"/>
    </ligand>
</feature>
<feature type="binding site" evidence="1">
    <location>
        <position position="261"/>
    </location>
    <ligand>
        <name>Mg(2+)</name>
        <dbReference type="ChEBI" id="CHEBI:18420"/>
    </ligand>
</feature>
<feature type="binding site" evidence="1">
    <location>
        <position position="263"/>
    </location>
    <ligand>
        <name>Mg(2+)</name>
        <dbReference type="ChEBI" id="CHEBI:18420"/>
    </ligand>
</feature>
<feature type="modified residue" description="N6-acetyllysine" evidence="1">
    <location>
        <position position="716"/>
    </location>
</feature>
<feature type="helix" evidence="2">
    <location>
        <begin position="66"/>
        <end position="68"/>
    </location>
</feature>
<feature type="helix" evidence="2">
    <location>
        <begin position="76"/>
        <end position="99"/>
    </location>
</feature>
<feature type="helix" evidence="2">
    <location>
        <begin position="109"/>
        <end position="124"/>
    </location>
</feature>
<feature type="strand" evidence="2">
    <location>
        <begin position="131"/>
        <end position="133"/>
    </location>
</feature>
<feature type="strand" evidence="2">
    <location>
        <begin position="137"/>
        <end position="139"/>
    </location>
</feature>
<feature type="helix" evidence="2">
    <location>
        <begin position="142"/>
        <end position="144"/>
    </location>
</feature>
<feature type="helix" evidence="2">
    <location>
        <begin position="145"/>
        <end position="154"/>
    </location>
</feature>
<feature type="helix" evidence="2">
    <location>
        <begin position="160"/>
        <end position="163"/>
    </location>
</feature>
<feature type="turn" evidence="2">
    <location>
        <begin position="181"/>
        <end position="183"/>
    </location>
</feature>
<feature type="turn" evidence="2">
    <location>
        <begin position="185"/>
        <end position="187"/>
    </location>
</feature>
<feature type="helix" evidence="2">
    <location>
        <begin position="197"/>
        <end position="214"/>
    </location>
</feature>
<feature type="strand" evidence="2">
    <location>
        <begin position="225"/>
        <end position="230"/>
    </location>
</feature>
<feature type="helix" evidence="2">
    <location>
        <begin position="233"/>
        <end position="235"/>
    </location>
</feature>
<feature type="helix" evidence="2">
    <location>
        <begin position="237"/>
        <end position="240"/>
    </location>
</feature>
<feature type="helix" evidence="2">
    <location>
        <begin position="243"/>
        <end position="248"/>
    </location>
</feature>
<feature type="strand" evidence="2">
    <location>
        <begin position="254"/>
        <end position="260"/>
    </location>
</feature>
<feature type="strand" evidence="2">
    <location>
        <begin position="265"/>
        <end position="269"/>
    </location>
</feature>
<feature type="strand" evidence="2">
    <location>
        <begin position="271"/>
        <end position="273"/>
    </location>
</feature>
<feature type="helix" evidence="2">
    <location>
        <begin position="275"/>
        <end position="285"/>
    </location>
</feature>
<feature type="strand" evidence="2">
    <location>
        <begin position="289"/>
        <end position="293"/>
    </location>
</feature>
<feature type="helix" evidence="2">
    <location>
        <begin position="297"/>
        <end position="299"/>
    </location>
</feature>
<feature type="helix" evidence="2">
    <location>
        <begin position="300"/>
        <end position="305"/>
    </location>
</feature>
<feature type="helix" evidence="2">
    <location>
        <begin position="310"/>
        <end position="317"/>
    </location>
</feature>
<feature type="helix" evidence="2">
    <location>
        <begin position="320"/>
        <end position="326"/>
    </location>
</feature>
<feature type="helix" evidence="2">
    <location>
        <begin position="331"/>
        <end position="337"/>
    </location>
</feature>
<feature type="helix" evidence="3">
    <location>
        <begin position="339"/>
        <end position="341"/>
    </location>
</feature>
<feature type="helix" evidence="2">
    <location>
        <begin position="343"/>
        <end position="346"/>
    </location>
</feature>
<feature type="turn" evidence="2">
    <location>
        <begin position="347"/>
        <end position="349"/>
    </location>
</feature>
<feature type="strand" evidence="2">
    <location>
        <begin position="350"/>
        <end position="352"/>
    </location>
</feature>
<feature type="helix" evidence="2">
    <location>
        <begin position="354"/>
        <end position="357"/>
    </location>
</feature>
<feature type="helix" evidence="2">
    <location>
        <begin position="363"/>
        <end position="365"/>
    </location>
</feature>
<feature type="helix" evidence="2">
    <location>
        <begin position="367"/>
        <end position="379"/>
    </location>
</feature>
<feature type="strand" evidence="2">
    <location>
        <begin position="385"/>
        <end position="390"/>
    </location>
</feature>
<feature type="turn" evidence="2">
    <location>
        <begin position="393"/>
        <end position="396"/>
    </location>
</feature>
<feature type="helix" evidence="2">
    <location>
        <begin position="416"/>
        <end position="424"/>
    </location>
</feature>
<feature type="helix" evidence="2">
    <location>
        <begin position="431"/>
        <end position="434"/>
    </location>
</feature>
<feature type="helix" evidence="2">
    <location>
        <begin position="447"/>
        <end position="457"/>
    </location>
</feature>
<feature type="turn" evidence="2">
    <location>
        <begin position="458"/>
        <end position="460"/>
    </location>
</feature>
<feature type="helix" evidence="2">
    <location>
        <begin position="479"/>
        <end position="482"/>
    </location>
</feature>
<feature type="helix" evidence="2">
    <location>
        <begin position="483"/>
        <end position="486"/>
    </location>
</feature>
<feature type="helix" evidence="2">
    <location>
        <begin position="495"/>
        <end position="506"/>
    </location>
</feature>
<feature type="turn" evidence="2">
    <location>
        <begin position="510"/>
        <end position="515"/>
    </location>
</feature>
<feature type="strand" evidence="2">
    <location>
        <begin position="516"/>
        <end position="522"/>
    </location>
</feature>
<feature type="helix" evidence="2">
    <location>
        <begin position="525"/>
        <end position="527"/>
    </location>
</feature>
<feature type="helix" evidence="2">
    <location>
        <begin position="530"/>
        <end position="536"/>
    </location>
</feature>
<feature type="strand" evidence="2">
    <location>
        <begin position="565"/>
        <end position="567"/>
    </location>
</feature>
<feature type="helix" evidence="2">
    <location>
        <begin position="572"/>
        <end position="583"/>
    </location>
</feature>
<feature type="helix" evidence="2">
    <location>
        <begin position="585"/>
        <end position="588"/>
    </location>
</feature>
<feature type="strand" evidence="2">
    <location>
        <begin position="594"/>
        <end position="600"/>
    </location>
</feature>
<feature type="helix" evidence="2">
    <location>
        <begin position="601"/>
        <end position="603"/>
    </location>
</feature>
<feature type="helix" evidence="2">
    <location>
        <begin position="605"/>
        <end position="617"/>
    </location>
</feature>
<feature type="strand" evidence="2">
    <location>
        <begin position="623"/>
        <end position="628"/>
    </location>
</feature>
<feature type="turn" evidence="2">
    <location>
        <begin position="631"/>
        <end position="633"/>
    </location>
</feature>
<feature type="turn" evidence="2">
    <location>
        <begin position="635"/>
        <end position="637"/>
    </location>
</feature>
<feature type="turn" evidence="2">
    <location>
        <begin position="639"/>
        <end position="641"/>
    </location>
</feature>
<feature type="helix" evidence="2">
    <location>
        <begin position="646"/>
        <end position="650"/>
    </location>
</feature>
<feature type="strand" evidence="2">
    <location>
        <begin position="656"/>
        <end position="659"/>
    </location>
</feature>
<feature type="helix" evidence="2">
    <location>
        <begin position="664"/>
        <end position="679"/>
    </location>
</feature>
<feature type="strand" evidence="2">
    <location>
        <begin position="687"/>
        <end position="691"/>
    </location>
</feature>
<feature type="helix" evidence="2">
    <location>
        <begin position="707"/>
        <end position="712"/>
    </location>
</feature>
<feature type="strand" evidence="2">
    <location>
        <begin position="714"/>
        <end position="720"/>
    </location>
</feature>
<feature type="strand" evidence="2">
    <location>
        <begin position="726"/>
        <end position="731"/>
    </location>
</feature>
<feature type="helix" evidence="2">
    <location>
        <begin position="733"/>
        <end position="735"/>
    </location>
</feature>
<feature type="helix" evidence="2">
    <location>
        <begin position="736"/>
        <end position="750"/>
    </location>
</feature>
<feature type="strand" evidence="2">
    <location>
        <begin position="753"/>
        <end position="760"/>
    </location>
</feature>
<feature type="helix" evidence="2">
    <location>
        <begin position="762"/>
        <end position="778"/>
    </location>
</feature>
<feature type="helix" evidence="2">
    <location>
        <begin position="788"/>
        <end position="792"/>
    </location>
</feature>
<feature type="strand" evidence="2">
    <location>
        <begin position="798"/>
        <end position="801"/>
    </location>
</feature>
<feature type="helix" evidence="2">
    <location>
        <begin position="807"/>
        <end position="810"/>
    </location>
</feature>
<feature type="helix" evidence="2">
    <location>
        <begin position="811"/>
        <end position="815"/>
    </location>
</feature>
<feature type="strand" evidence="3">
    <location>
        <begin position="817"/>
        <end position="819"/>
    </location>
</feature>
<feature type="strand" evidence="2">
    <location>
        <begin position="821"/>
        <end position="824"/>
    </location>
</feature>
<feature type="helix" evidence="2">
    <location>
        <begin position="835"/>
        <end position="841"/>
    </location>
</feature>
<feature type="helix" evidence="2">
    <location>
        <begin position="846"/>
        <end position="859"/>
    </location>
</feature>
<feature type="helix" evidence="2">
    <location>
        <begin position="865"/>
        <end position="874"/>
    </location>
</feature>
<feature type="turn" evidence="2">
    <location>
        <begin position="884"/>
        <end position="886"/>
    </location>
</feature>
<sequence>MSERFPNDVDPIETRDWLQAIESVIREEGVERAQYLIDQLLAEARKGGVNVAAGTGISNYINTIPVEEQPEYPGNLELERRIRSAIRWNAIMTVLRASKKDLELGGHMASFQSSATIYDVCFNHFFRARNEQDGGDLVYFQGHISPGVYARAFLEGRLTQEQLDNFRQEVHGNGLSSYPHPKLMPEFWQFPTVSMGLGPIGAIYQAKFLKYLEHRGLKDTSKQTVYAFLGDGEMDEPESKGAITIATREKLDNLVFVINCNLQRLDGPVTGNGKIINELEGIFEGAGWNVIKVMWGSRWDELLRKDTSGKLIQLMNETVDGDYQTFKSKDGAYVREHFFGKYPETAALVADWTDEQIWALNRGGHDPKKIYAAFKKAQETKGKATVILAHTIKGYGMGDAAEGKNIAHQVKKMNMDGVRHIRDRFNVPVSDADIEKLPYITFPEGSEEHTYLHAQRQKLHGYLPSRQPNFTEKLELPSLQDFGALLEEQSKEISTTIAFVRALNVMLKNKSIKDRLVPIIADEARTFGMEGLFRQIGIYSPNGQQYTPQDREQVAYYKEDEKGQILQEGINELGAGCSWLAAATSYSTNNLPMIPFYIYYSMFGFQRIGDLCWAAGDQQARGFLIGGTSGRTTLNGEGLQHEDGHSHIQSLTIPNCISYDPAYAYEVAVIMHDGLERMYGEKQENVYYYITTLNENYHMPAMPEGAEEGIRKGIYKLETIEGSKGKVQLLGSGSILRHVREAAEILAKDYGVGSDVYSVTSFTELARDGQDCERWNMLHPLETPRVPYIAQVMNDAPAVASTDYMKLFAEQVRTYVPADDYRVLGTDGFGRSDSRENLRHHFEVDASYVVVAALGELAKRGEIDKKVVADAIAKFNIDADKVNPRLA</sequence>
<evidence type="ECO:0000250" key="1"/>
<evidence type="ECO:0007829" key="2">
    <source>
        <dbReference type="PDB" id="3LQ2"/>
    </source>
</evidence>
<evidence type="ECO:0007829" key="3">
    <source>
        <dbReference type="PDB" id="3LQ4"/>
    </source>
</evidence>
<name>ODP1_ECO57</name>
<organism>
    <name type="scientific">Escherichia coli O157:H7</name>
    <dbReference type="NCBI Taxonomy" id="83334"/>
    <lineage>
        <taxon>Bacteria</taxon>
        <taxon>Pseudomonadati</taxon>
        <taxon>Pseudomonadota</taxon>
        <taxon>Gammaproteobacteria</taxon>
        <taxon>Enterobacterales</taxon>
        <taxon>Enterobacteriaceae</taxon>
        <taxon>Escherichia</taxon>
    </lineage>
</organism>
<comment type="function">
    <text evidence="1">Component of the pyruvate dehydrogenase (PDH) complex, that catalyzes the overall conversion of pyruvate to acetyl-CoA and CO(2).</text>
</comment>
<comment type="catalytic activity">
    <reaction>
        <text>N(6)-[(R)-lipoyl]-L-lysyl-[protein] + pyruvate + H(+) = N(6)-[(R)-S(8)-acetyldihydrolipoyl]-L-lysyl-[protein] + CO2</text>
        <dbReference type="Rhea" id="RHEA:19189"/>
        <dbReference type="Rhea" id="RHEA-COMP:10474"/>
        <dbReference type="Rhea" id="RHEA-COMP:10478"/>
        <dbReference type="ChEBI" id="CHEBI:15361"/>
        <dbReference type="ChEBI" id="CHEBI:15378"/>
        <dbReference type="ChEBI" id="CHEBI:16526"/>
        <dbReference type="ChEBI" id="CHEBI:83099"/>
        <dbReference type="ChEBI" id="CHEBI:83111"/>
        <dbReference type="EC" id="1.2.4.1"/>
    </reaction>
</comment>
<comment type="cofactor">
    <cofactor evidence="1">
        <name>Mg(2+)</name>
        <dbReference type="ChEBI" id="CHEBI:18420"/>
    </cofactor>
</comment>
<comment type="cofactor">
    <cofactor evidence="1">
        <name>thiamine diphosphate</name>
        <dbReference type="ChEBI" id="CHEBI:58937"/>
    </cofactor>
</comment>
<comment type="subunit">
    <text evidence="1">Homodimer. Part of the PDH complex, consisting of multiple copies of pyruvate dehydrogenase (E1), dihydrolipoamide acetyltransferase (E2) and lipoamide dehydrogenase (E3).</text>
</comment>
<gene>
    <name type="primary">aceE</name>
    <name type="ordered locus">Z0124</name>
    <name type="ordered locus">ECs0118</name>
</gene>
<keyword id="KW-0002">3D-structure</keyword>
<keyword id="KW-0007">Acetylation</keyword>
<keyword id="KW-0460">Magnesium</keyword>
<keyword id="KW-0479">Metal-binding</keyword>
<keyword id="KW-0560">Oxidoreductase</keyword>
<keyword id="KW-0670">Pyruvate</keyword>
<keyword id="KW-1185">Reference proteome</keyword>
<keyword id="KW-0786">Thiamine pyrophosphate</keyword>
<accession>P0AFG9</accession>
<accession>P06958</accession>
<accession>P78049</accession>
<accession>Q53382</accession>